<organism>
    <name type="scientific">Zea mays</name>
    <name type="common">Maize</name>
    <dbReference type="NCBI Taxonomy" id="4577"/>
    <lineage>
        <taxon>Eukaryota</taxon>
        <taxon>Viridiplantae</taxon>
        <taxon>Streptophyta</taxon>
        <taxon>Embryophyta</taxon>
        <taxon>Tracheophyta</taxon>
        <taxon>Spermatophyta</taxon>
        <taxon>Magnoliopsida</taxon>
        <taxon>Liliopsida</taxon>
        <taxon>Poales</taxon>
        <taxon>Poaceae</taxon>
        <taxon>PACMAD clade</taxon>
        <taxon>Panicoideae</taxon>
        <taxon>Andropogonodae</taxon>
        <taxon>Andropogoneae</taxon>
        <taxon>Tripsacinae</taxon>
        <taxon>Zea</taxon>
    </lineage>
</organism>
<evidence type="ECO:0000255" key="1"/>
<evidence type="ECO:0000269" key="2">
    <source>
    </source>
</evidence>
<evidence type="ECO:0000305" key="3"/>
<comment type="subcellular location">
    <subcellularLocation>
        <location evidence="3">Membrane</location>
        <topology evidence="3">Multi-pass membrane protein</topology>
    </subcellularLocation>
</comment>
<comment type="tissue specificity">
    <text evidence="2">Expressed in roots, coleoptiles, leaves, stalks, apical meristems, immature ears, embryos, endosperm, pericarp, silks, tassel spikelets and pollen. Highest expression in the pericarp and stalks.</text>
</comment>
<comment type="similarity">
    <text evidence="3">Belongs to the cornifelin family.</text>
</comment>
<gene>
    <name type="primary">CNR8</name>
    <name type="synonym">SAT5</name>
</gene>
<accession>B4FUS3</accession>
<accession>B6TKP2</accession>
<name>CNR8_MAIZE</name>
<dbReference type="EMBL" id="HM008660">
    <property type="protein sequence ID" value="ADI48422.1"/>
    <property type="molecule type" value="mRNA"/>
</dbReference>
<dbReference type="EMBL" id="BT040861">
    <property type="protein sequence ID" value="ACF85866.1"/>
    <property type="molecule type" value="mRNA"/>
</dbReference>
<dbReference type="EMBL" id="EU965557">
    <property type="protein sequence ID" value="ACG37675.1"/>
    <property type="molecule type" value="mRNA"/>
</dbReference>
<dbReference type="FunCoup" id="B4FUS3">
    <property type="interactions" value="2579"/>
</dbReference>
<dbReference type="STRING" id="4577.B4FUS3"/>
<dbReference type="PaxDb" id="4577-GRMZM2G334628_P02"/>
<dbReference type="EnsemblPlants" id="Zm00001eb123690_T001">
    <property type="protein sequence ID" value="Zm00001eb123690_P001"/>
    <property type="gene ID" value="Zm00001eb123690"/>
</dbReference>
<dbReference type="Gramene" id="Zm00001eb123690_T001">
    <property type="protein sequence ID" value="Zm00001eb123690_P001"/>
    <property type="gene ID" value="Zm00001eb123690"/>
</dbReference>
<dbReference type="eggNOG" id="KOG2134">
    <property type="taxonomic scope" value="Eukaryota"/>
</dbReference>
<dbReference type="eggNOG" id="KOG4513">
    <property type="taxonomic scope" value="Eukaryota"/>
</dbReference>
<dbReference type="InParanoid" id="B4FUS3"/>
<dbReference type="OrthoDB" id="1045822at2759"/>
<dbReference type="Proteomes" id="UP000007305">
    <property type="component" value="Chromosome 3"/>
</dbReference>
<dbReference type="ExpressionAtlas" id="B4FUS3">
    <property type="expression patterns" value="baseline and differential"/>
</dbReference>
<dbReference type="GO" id="GO:0016020">
    <property type="term" value="C:membrane"/>
    <property type="evidence" value="ECO:0007669"/>
    <property type="project" value="UniProtKB-SubCell"/>
</dbReference>
<dbReference type="InterPro" id="IPR006461">
    <property type="entry name" value="PLAC_motif_containing"/>
</dbReference>
<dbReference type="NCBIfam" id="TIGR01571">
    <property type="entry name" value="A_thal_Cys_rich"/>
    <property type="match status" value="1"/>
</dbReference>
<dbReference type="PANTHER" id="PTHR15907">
    <property type="entry name" value="DUF614 FAMILY PROTEIN-RELATED"/>
    <property type="match status" value="1"/>
</dbReference>
<dbReference type="Pfam" id="PF04749">
    <property type="entry name" value="PLAC8"/>
    <property type="match status" value="1"/>
</dbReference>
<feature type="chain" id="PRO_0000407736" description="Cell number regulator 8">
    <location>
        <begin position="1"/>
        <end position="233"/>
    </location>
</feature>
<feature type="transmembrane region" description="Helical" evidence="1">
    <location>
        <begin position="85"/>
        <end position="101"/>
    </location>
</feature>
<feature type="transmembrane region" description="Helical" evidence="1">
    <location>
        <begin position="115"/>
        <end position="138"/>
    </location>
</feature>
<feature type="sequence conflict" description="In Ref. 3; ACG37675." evidence="3" ref="3">
    <original>Y</original>
    <variation>D</variation>
    <location>
        <position position="24"/>
    </location>
</feature>
<protein>
    <recommendedName>
        <fullName>Cell number regulator 8</fullName>
    </recommendedName>
    <alternativeName>
        <fullName>ZmCNR08</fullName>
    </alternativeName>
</protein>
<sequence>MGAGANNHEESSPLIPAAVAAPAYEKPPQAPAPEAANYYADGVPVVMGEPVSAHAFGGVPRESWNSGILSCLGRNDEFCSSDVEVCLLGTVAPCVLYGSNVERLAAGQGTFANSCLPYTGLYLLGNSLFGWNCLAPWFSHPTRTAIRQRYNLEGSFEAFTRQCGCCGDLVEDEERREHLEAACDLATHYLCHPCALCQEGRELRRRVPHPGFNNGHSVFVMMPPMEQTMGRGM</sequence>
<proteinExistence type="evidence at transcript level"/>
<keyword id="KW-0472">Membrane</keyword>
<keyword id="KW-1185">Reference proteome</keyword>
<keyword id="KW-0812">Transmembrane</keyword>
<keyword id="KW-1133">Transmembrane helix</keyword>
<reference key="1">
    <citation type="journal article" date="2010" name="Plant Cell">
        <title>Cell Number Regulator1 affects plant and organ size in maize: implications for crop yield enhancement and heterosis.</title>
        <authorList>
            <person name="Guo M."/>
            <person name="Rupe M.A."/>
            <person name="Dieter J.A."/>
            <person name="Zou J."/>
            <person name="Spielbauer D."/>
            <person name="Duncan K.E."/>
            <person name="Howard R.J."/>
            <person name="Hou Z."/>
            <person name="Simmons C.R."/>
        </authorList>
    </citation>
    <scope>NUCLEOTIDE SEQUENCE [MRNA]</scope>
    <scope>TISSUE SPECIFICITY</scope>
    <scope>GENE FAMILY</scope>
    <scope>NOMENCLATURE</scope>
    <source>
        <strain>cv. B73</strain>
    </source>
</reference>
<reference key="2">
    <citation type="submission" date="2008-07" db="EMBL/GenBank/DDBJ databases">
        <title>Maize full-length cDNA project.</title>
        <authorList>
            <person name="Yu Y."/>
            <person name="Currie J."/>
            <person name="Lomeli R."/>
            <person name="Angelova A."/>
            <person name="Collura K."/>
            <person name="Wissotski M."/>
            <person name="Campos D."/>
            <person name="Kudrna D."/>
            <person name="Golser W."/>
            <person name="Ashely E."/>
            <person name="Haller K."/>
            <person name="Descour A."/>
            <person name="Fernandes J."/>
            <person name="Zuccolo A."/>
            <person name="Soderlund C."/>
            <person name="Walbot V."/>
        </authorList>
    </citation>
    <scope>NUCLEOTIDE SEQUENCE [LARGE SCALE MRNA]</scope>
    <source>
        <strain>cv. B73</strain>
    </source>
</reference>
<reference key="3">
    <citation type="journal article" date="2009" name="Plant Mol. Biol.">
        <title>Insights into corn genes derived from large-scale cDNA sequencing.</title>
        <authorList>
            <person name="Alexandrov N.N."/>
            <person name="Brover V.V."/>
            <person name="Freidin S."/>
            <person name="Troukhan M.E."/>
            <person name="Tatarinova T.V."/>
            <person name="Zhang H."/>
            <person name="Swaller T.J."/>
            <person name="Lu Y.-P."/>
            <person name="Bouck J."/>
            <person name="Flavell R.B."/>
            <person name="Feldmann K.A."/>
        </authorList>
    </citation>
    <scope>NUCLEOTIDE SEQUENCE [LARGE SCALE MRNA]</scope>
</reference>